<sequence>MFEEPEWVEAAPAIVGLGAATAQVRPATAPPVKGRKRRHLLATLRALEAASLSQQTPSLPGSDSEEEEEVGRKKRHLQRPSLASVSKEVGKKRKGKCQKQAPSISDSEGKEIRRKCHRQAPPLGGVSAGEEKGKRKCQEYSSLHLTQPLDSVDQTVHNSRTSTATIDPSKPSPESMSPNSSHTLSRKQWRNRQKNKRRHKNKFRPLQTPEQAPPKASIEETEVPPVPKSDSQESRAGALRARMTQRLDGARFRYLNEQLYSGPSSAARRLFQEDPEAFLLYHRGFQRQVKKWPLHPVDRIAKDLRQKPASLVVADFGCGDCRLASSVRNPVHCFDLASLDPRVTVCDMAQVPLEDESVDVAVFCLSLMGTNIRDFLEEANRVLKTGGLLKVAEVSSRFEDIRTFLGAVTKLGFKIIYKDLTNSHFFLFDFEKTGPPRVGPKAQLSGLKLQPCLYKRR</sequence>
<gene>
    <name type="primary">Rrp8</name>
</gene>
<evidence type="ECO:0000250" key="1"/>
<evidence type="ECO:0000250" key="2">
    <source>
        <dbReference type="UniProtKB" id="O43159"/>
    </source>
</evidence>
<evidence type="ECO:0000256" key="3">
    <source>
        <dbReference type="SAM" id="MobiDB-lite"/>
    </source>
</evidence>
<evidence type="ECO:0000305" key="4"/>
<evidence type="ECO:0007744" key="5">
    <source>
    </source>
</evidence>
<evidence type="ECO:0007744" key="6">
    <source>
    </source>
</evidence>
<name>RRP8_MOUSE</name>
<proteinExistence type="evidence at protein level"/>
<dbReference type="EC" id="2.1.1.-"/>
<dbReference type="EMBL" id="AK005138">
    <property type="protein sequence ID" value="BAB23836.1"/>
    <property type="molecule type" value="mRNA"/>
</dbReference>
<dbReference type="EMBL" id="AK045361">
    <property type="protein sequence ID" value="BAC32326.1"/>
    <property type="molecule type" value="mRNA"/>
</dbReference>
<dbReference type="EMBL" id="AK077786">
    <property type="protein sequence ID" value="BAC37008.1"/>
    <property type="status" value="ALT_FRAME"/>
    <property type="molecule type" value="mRNA"/>
</dbReference>
<dbReference type="EMBL" id="AK154858">
    <property type="protein sequence ID" value="BAE32883.1"/>
    <property type="molecule type" value="mRNA"/>
</dbReference>
<dbReference type="EMBL" id="AK170257">
    <property type="protein sequence ID" value="BAE41665.1"/>
    <property type="molecule type" value="mRNA"/>
</dbReference>
<dbReference type="EMBL" id="AK172189">
    <property type="protein sequence ID" value="BAE42874.1"/>
    <property type="molecule type" value="mRNA"/>
</dbReference>
<dbReference type="EMBL" id="AK172224">
    <property type="protein sequence ID" value="BAE42891.1"/>
    <property type="molecule type" value="mRNA"/>
</dbReference>
<dbReference type="EMBL" id="BC022923">
    <property type="protein sequence ID" value="AAH22923.1"/>
    <property type="molecule type" value="mRNA"/>
</dbReference>
<dbReference type="EMBL" id="BC046799">
    <property type="protein sequence ID" value="AAH46799.1"/>
    <property type="molecule type" value="mRNA"/>
</dbReference>
<dbReference type="CCDS" id="CCDS21658.1"/>
<dbReference type="RefSeq" id="NP_080173.1">
    <property type="nucleotide sequence ID" value="NM_025897.2"/>
</dbReference>
<dbReference type="SMR" id="Q9DB85"/>
<dbReference type="BioGRID" id="221741">
    <property type="interactions" value="3"/>
</dbReference>
<dbReference type="ComplexPortal" id="CPX-468">
    <property type="entry name" value="eNoSc complex"/>
</dbReference>
<dbReference type="FunCoup" id="Q9DB85">
    <property type="interactions" value="2642"/>
</dbReference>
<dbReference type="STRING" id="10090.ENSMUSP00000095752"/>
<dbReference type="iPTMnet" id="Q9DB85"/>
<dbReference type="PhosphoSitePlus" id="Q9DB85"/>
<dbReference type="jPOST" id="Q9DB85"/>
<dbReference type="PaxDb" id="10090-ENSMUSP00000033179"/>
<dbReference type="PeptideAtlas" id="Q9DB85"/>
<dbReference type="ProteomicsDB" id="299934"/>
<dbReference type="Pumba" id="Q9DB85"/>
<dbReference type="Antibodypedia" id="23905">
    <property type="antibodies" value="157 antibodies from 30 providers"/>
</dbReference>
<dbReference type="DNASU" id="101867"/>
<dbReference type="Ensembl" id="ENSMUST00000033179.14">
    <property type="protein sequence ID" value="ENSMUSP00000033179.7"/>
    <property type="gene ID" value="ENSMUSG00000030888.15"/>
</dbReference>
<dbReference type="GeneID" id="101867"/>
<dbReference type="KEGG" id="mmu:101867"/>
<dbReference type="UCSC" id="uc009iyz.2">
    <property type="organism name" value="mouse"/>
</dbReference>
<dbReference type="AGR" id="MGI:1914251"/>
<dbReference type="CTD" id="23378"/>
<dbReference type="MGI" id="MGI:1914251">
    <property type="gene designation" value="Rrp8"/>
</dbReference>
<dbReference type="VEuPathDB" id="HostDB:ENSMUSG00000030888"/>
<dbReference type="eggNOG" id="KOG3045">
    <property type="taxonomic scope" value="Eukaryota"/>
</dbReference>
<dbReference type="GeneTree" id="ENSGT00390000006189"/>
<dbReference type="HOGENOM" id="CLU_027694_2_3_1"/>
<dbReference type="InParanoid" id="Q9DB85"/>
<dbReference type="OMA" id="QNQVKKW"/>
<dbReference type="OrthoDB" id="10258825at2759"/>
<dbReference type="PhylomeDB" id="Q9DB85"/>
<dbReference type="TreeFam" id="TF313749"/>
<dbReference type="BioGRID-ORCS" id="101867">
    <property type="hits" value="5 hits in 79 CRISPR screens"/>
</dbReference>
<dbReference type="ChiTaRS" id="Rrp8">
    <property type="organism name" value="mouse"/>
</dbReference>
<dbReference type="PRO" id="PR:Q9DB85"/>
<dbReference type="Proteomes" id="UP000000589">
    <property type="component" value="Chromosome 7"/>
</dbReference>
<dbReference type="RNAct" id="Q9DB85">
    <property type="molecule type" value="protein"/>
</dbReference>
<dbReference type="Bgee" id="ENSMUSG00000030888">
    <property type="expression patterns" value="Expressed in animal zygote and 219 other cell types or tissues"/>
</dbReference>
<dbReference type="ExpressionAtlas" id="Q9DB85">
    <property type="expression patterns" value="baseline and differential"/>
</dbReference>
<dbReference type="GO" id="GO:0005677">
    <property type="term" value="C:chromatin silencing complex"/>
    <property type="evidence" value="ECO:0000250"/>
    <property type="project" value="UniProtKB"/>
</dbReference>
<dbReference type="GO" id="GO:0005829">
    <property type="term" value="C:cytosol"/>
    <property type="evidence" value="ECO:0007669"/>
    <property type="project" value="Ensembl"/>
</dbReference>
<dbReference type="GO" id="GO:0061773">
    <property type="term" value="C:eNoSc complex"/>
    <property type="evidence" value="ECO:0000266"/>
    <property type="project" value="ComplexPortal"/>
</dbReference>
<dbReference type="GO" id="GO:0005730">
    <property type="term" value="C:nucleolus"/>
    <property type="evidence" value="ECO:0000250"/>
    <property type="project" value="UniProtKB"/>
</dbReference>
<dbReference type="GO" id="GO:0005654">
    <property type="term" value="C:nucleoplasm"/>
    <property type="evidence" value="ECO:0007669"/>
    <property type="project" value="Ensembl"/>
</dbReference>
<dbReference type="GO" id="GO:0005886">
    <property type="term" value="C:plasma membrane"/>
    <property type="evidence" value="ECO:0007669"/>
    <property type="project" value="Ensembl"/>
</dbReference>
<dbReference type="GO" id="GO:0033553">
    <property type="term" value="C:rDNA heterochromatin"/>
    <property type="evidence" value="ECO:0000250"/>
    <property type="project" value="UniProtKB"/>
</dbReference>
<dbReference type="GO" id="GO:0035064">
    <property type="term" value="F:methylated histone binding"/>
    <property type="evidence" value="ECO:0000250"/>
    <property type="project" value="UniProtKB"/>
</dbReference>
<dbReference type="GO" id="GO:0008168">
    <property type="term" value="F:methyltransferase activity"/>
    <property type="evidence" value="ECO:0007669"/>
    <property type="project" value="UniProtKB-KW"/>
</dbReference>
<dbReference type="GO" id="GO:0042149">
    <property type="term" value="P:cellular response to glucose starvation"/>
    <property type="evidence" value="ECO:0000266"/>
    <property type="project" value="ComplexPortal"/>
</dbReference>
<dbReference type="GO" id="GO:0097009">
    <property type="term" value="P:energy homeostasis"/>
    <property type="evidence" value="ECO:0000266"/>
    <property type="project" value="ComplexPortal"/>
</dbReference>
<dbReference type="GO" id="GO:0072332">
    <property type="term" value="P:intrinsic apoptotic signaling pathway by p53 class mediator"/>
    <property type="evidence" value="ECO:0007669"/>
    <property type="project" value="Ensembl"/>
</dbReference>
<dbReference type="GO" id="GO:0032259">
    <property type="term" value="P:methylation"/>
    <property type="evidence" value="ECO:0007669"/>
    <property type="project" value="UniProtKB-KW"/>
</dbReference>
<dbReference type="GO" id="GO:0045786">
    <property type="term" value="P:negative regulation of cell cycle"/>
    <property type="evidence" value="ECO:0000266"/>
    <property type="project" value="ComplexPortal"/>
</dbReference>
<dbReference type="GO" id="GO:0045892">
    <property type="term" value="P:negative regulation of DNA-templated transcription"/>
    <property type="evidence" value="ECO:0000266"/>
    <property type="project" value="ComplexPortal"/>
</dbReference>
<dbReference type="GO" id="GO:0000183">
    <property type="term" value="P:rDNA heterochromatin formation"/>
    <property type="evidence" value="ECO:0000250"/>
    <property type="project" value="UniProtKB"/>
</dbReference>
<dbReference type="GO" id="GO:1903450">
    <property type="term" value="P:regulation of G1 to G0 transition"/>
    <property type="evidence" value="ECO:0007669"/>
    <property type="project" value="Ensembl"/>
</dbReference>
<dbReference type="GO" id="GO:0046015">
    <property type="term" value="P:regulation of transcription by glucose"/>
    <property type="evidence" value="ECO:0000266"/>
    <property type="project" value="ComplexPortal"/>
</dbReference>
<dbReference type="GO" id="GO:0006364">
    <property type="term" value="P:rRNA processing"/>
    <property type="evidence" value="ECO:0007669"/>
    <property type="project" value="UniProtKB-KW"/>
</dbReference>
<dbReference type="CDD" id="cd02440">
    <property type="entry name" value="AdoMet_MTases"/>
    <property type="match status" value="1"/>
</dbReference>
<dbReference type="FunFam" id="1.10.10.2150:FF:000001">
    <property type="entry name" value="Ribosomal RNA-processing protein 8"/>
    <property type="match status" value="1"/>
</dbReference>
<dbReference type="FunFam" id="3.40.50.150:FF:000068">
    <property type="entry name" value="Ribosomal RNA-processing protein 8"/>
    <property type="match status" value="1"/>
</dbReference>
<dbReference type="Gene3D" id="1.10.10.2150">
    <property type="entry name" value="Ribosomal RNA-processing protein 8, N-terminal domain"/>
    <property type="match status" value="1"/>
</dbReference>
<dbReference type="Gene3D" id="3.40.50.150">
    <property type="entry name" value="Vaccinia Virus protein VP39"/>
    <property type="match status" value="1"/>
</dbReference>
<dbReference type="InterPro" id="IPR007823">
    <property type="entry name" value="RRP8"/>
</dbReference>
<dbReference type="InterPro" id="IPR042036">
    <property type="entry name" value="RRP8_N"/>
</dbReference>
<dbReference type="InterPro" id="IPR029063">
    <property type="entry name" value="SAM-dependent_MTases_sf"/>
</dbReference>
<dbReference type="PANTHER" id="PTHR12787">
    <property type="entry name" value="RIBOSOMAL RNA-PROCESSING PROTEIN 8"/>
    <property type="match status" value="1"/>
</dbReference>
<dbReference type="PANTHER" id="PTHR12787:SF0">
    <property type="entry name" value="RIBOSOMAL RNA-PROCESSING PROTEIN 8"/>
    <property type="match status" value="1"/>
</dbReference>
<dbReference type="Pfam" id="PF05148">
    <property type="entry name" value="Methyltransf_8"/>
    <property type="match status" value="1"/>
</dbReference>
<dbReference type="SUPFAM" id="SSF53335">
    <property type="entry name" value="S-adenosyl-L-methionine-dependent methyltransferases"/>
    <property type="match status" value="1"/>
</dbReference>
<feature type="chain" id="PRO_0000084091" description="Ribosomal RNA-processing protein 8">
    <location>
        <begin position="1"/>
        <end position="457"/>
    </location>
</feature>
<feature type="region of interest" description="Disordered" evidence="3">
    <location>
        <begin position="47"/>
        <end position="237"/>
    </location>
</feature>
<feature type="compositionally biased region" description="Polar residues" evidence="3">
    <location>
        <begin position="51"/>
        <end position="61"/>
    </location>
</feature>
<feature type="compositionally biased region" description="Basic and acidic residues" evidence="3">
    <location>
        <begin position="129"/>
        <end position="138"/>
    </location>
</feature>
<feature type="compositionally biased region" description="Polar residues" evidence="3">
    <location>
        <begin position="139"/>
        <end position="183"/>
    </location>
</feature>
<feature type="compositionally biased region" description="Basic residues" evidence="3">
    <location>
        <begin position="184"/>
        <end position="203"/>
    </location>
</feature>
<feature type="binding site" evidence="2">
    <location>
        <position position="282"/>
    </location>
    <ligand>
        <name>S-adenosyl-L-methionine</name>
        <dbReference type="ChEBI" id="CHEBI:59789"/>
    </ligand>
</feature>
<feature type="binding site" evidence="2">
    <location>
        <position position="317"/>
    </location>
    <ligand>
        <name>S-adenosyl-L-methionine</name>
        <dbReference type="ChEBI" id="CHEBI:59789"/>
    </ligand>
</feature>
<feature type="binding site" evidence="2">
    <location>
        <position position="335"/>
    </location>
    <ligand>
        <name>S-adenosyl-L-methionine</name>
        <dbReference type="ChEBI" id="CHEBI:59789"/>
    </ligand>
</feature>
<feature type="binding site" evidence="2">
    <location>
        <position position="347"/>
    </location>
    <ligand>
        <name>S-adenosyl-L-methionine</name>
        <dbReference type="ChEBI" id="CHEBI:59789"/>
    </ligand>
</feature>
<feature type="binding site" evidence="2">
    <location>
        <position position="348"/>
    </location>
    <ligand>
        <name>S-adenosyl-L-methionine</name>
        <dbReference type="ChEBI" id="CHEBI:59789"/>
    </ligand>
</feature>
<feature type="binding site" evidence="2">
    <location>
        <position position="364"/>
    </location>
    <ligand>
        <name>S-adenosyl-L-methionine</name>
        <dbReference type="ChEBI" id="CHEBI:59789"/>
    </ligand>
</feature>
<feature type="modified residue" description="Phosphoserine" evidence="5 6">
    <location>
        <position position="62"/>
    </location>
</feature>
<feature type="modified residue" description="Phosphoserine" evidence="5 6">
    <location>
        <position position="64"/>
    </location>
</feature>
<feature type="modified residue" description="Phosphoserine" evidence="2">
    <location>
        <position position="105"/>
    </location>
</feature>
<feature type="modified residue" description="Phosphoserine" evidence="2">
    <location>
        <position position="172"/>
    </location>
</feature>
<feature type="modified residue" description="Phosphoserine" evidence="6">
    <location>
        <position position="177"/>
    </location>
</feature>
<feature type="sequence conflict" description="In Ref. 1; BAE41665/BAE42891/BAE42874." evidence="4" ref="1">
    <original>P</original>
    <variation>R</variation>
    <location>
        <position position="30"/>
    </location>
</feature>
<feature type="sequence conflict" description="In Ref. 1; BAE41665/BAE42891/BAE42874." evidence="4" ref="1">
    <original>S</original>
    <variation>N</variation>
    <location>
        <position position="151"/>
    </location>
</feature>
<feature type="sequence conflict" description="In Ref. 1; BAE32883." evidence="4" ref="1">
    <original>P</original>
    <variation>H</variation>
    <location>
        <position position="173"/>
    </location>
</feature>
<feature type="sequence conflict" description="In Ref. 1; BAE41665/BAE42891/BAE42874." evidence="4" ref="1">
    <original>R</original>
    <variation>Q</variation>
    <location>
        <position position="268"/>
    </location>
</feature>
<feature type="sequence conflict" description="In Ref. 1; BAE32883." evidence="4" ref="1">
    <original>T</original>
    <variation>N</variation>
    <location>
        <position position="370"/>
    </location>
</feature>
<feature type="sequence conflict" description="In Ref. 1; BAE41665/BAE42891/BAE42874." evidence="4" ref="1">
    <original>T</original>
    <variation>P</variation>
    <location>
        <position position="385"/>
    </location>
</feature>
<feature type="sequence conflict" description="In Ref. 1; BAE41665." evidence="4" ref="1">
    <original>V</original>
    <variation>A</variation>
    <location>
        <position position="394"/>
    </location>
</feature>
<accession>Q9DB85</accession>
<accession>Q3T9X9</accession>
<accession>Q3TDD7</accession>
<accession>Q3U3A5</accession>
<accession>Q8BHW3</accession>
<organism>
    <name type="scientific">Mus musculus</name>
    <name type="common">Mouse</name>
    <dbReference type="NCBI Taxonomy" id="10090"/>
    <lineage>
        <taxon>Eukaryota</taxon>
        <taxon>Metazoa</taxon>
        <taxon>Chordata</taxon>
        <taxon>Craniata</taxon>
        <taxon>Vertebrata</taxon>
        <taxon>Euteleostomi</taxon>
        <taxon>Mammalia</taxon>
        <taxon>Eutheria</taxon>
        <taxon>Euarchontoglires</taxon>
        <taxon>Glires</taxon>
        <taxon>Rodentia</taxon>
        <taxon>Myomorpha</taxon>
        <taxon>Muroidea</taxon>
        <taxon>Muridae</taxon>
        <taxon>Murinae</taxon>
        <taxon>Mus</taxon>
        <taxon>Mus</taxon>
    </lineage>
</organism>
<reference key="1">
    <citation type="journal article" date="2005" name="Science">
        <title>The transcriptional landscape of the mammalian genome.</title>
        <authorList>
            <person name="Carninci P."/>
            <person name="Kasukawa T."/>
            <person name="Katayama S."/>
            <person name="Gough J."/>
            <person name="Frith M.C."/>
            <person name="Maeda N."/>
            <person name="Oyama R."/>
            <person name="Ravasi T."/>
            <person name="Lenhard B."/>
            <person name="Wells C."/>
            <person name="Kodzius R."/>
            <person name="Shimokawa K."/>
            <person name="Bajic V.B."/>
            <person name="Brenner S.E."/>
            <person name="Batalov S."/>
            <person name="Forrest A.R."/>
            <person name="Zavolan M."/>
            <person name="Davis M.J."/>
            <person name="Wilming L.G."/>
            <person name="Aidinis V."/>
            <person name="Allen J.E."/>
            <person name="Ambesi-Impiombato A."/>
            <person name="Apweiler R."/>
            <person name="Aturaliya R.N."/>
            <person name="Bailey T.L."/>
            <person name="Bansal M."/>
            <person name="Baxter L."/>
            <person name="Beisel K.W."/>
            <person name="Bersano T."/>
            <person name="Bono H."/>
            <person name="Chalk A.M."/>
            <person name="Chiu K.P."/>
            <person name="Choudhary V."/>
            <person name="Christoffels A."/>
            <person name="Clutterbuck D.R."/>
            <person name="Crowe M.L."/>
            <person name="Dalla E."/>
            <person name="Dalrymple B.P."/>
            <person name="de Bono B."/>
            <person name="Della Gatta G."/>
            <person name="di Bernardo D."/>
            <person name="Down T."/>
            <person name="Engstrom P."/>
            <person name="Fagiolini M."/>
            <person name="Faulkner G."/>
            <person name="Fletcher C.F."/>
            <person name="Fukushima T."/>
            <person name="Furuno M."/>
            <person name="Futaki S."/>
            <person name="Gariboldi M."/>
            <person name="Georgii-Hemming P."/>
            <person name="Gingeras T.R."/>
            <person name="Gojobori T."/>
            <person name="Green R.E."/>
            <person name="Gustincich S."/>
            <person name="Harbers M."/>
            <person name="Hayashi Y."/>
            <person name="Hensch T.K."/>
            <person name="Hirokawa N."/>
            <person name="Hill D."/>
            <person name="Huminiecki L."/>
            <person name="Iacono M."/>
            <person name="Ikeo K."/>
            <person name="Iwama A."/>
            <person name="Ishikawa T."/>
            <person name="Jakt M."/>
            <person name="Kanapin A."/>
            <person name="Katoh M."/>
            <person name="Kawasawa Y."/>
            <person name="Kelso J."/>
            <person name="Kitamura H."/>
            <person name="Kitano H."/>
            <person name="Kollias G."/>
            <person name="Krishnan S.P."/>
            <person name="Kruger A."/>
            <person name="Kummerfeld S.K."/>
            <person name="Kurochkin I.V."/>
            <person name="Lareau L.F."/>
            <person name="Lazarevic D."/>
            <person name="Lipovich L."/>
            <person name="Liu J."/>
            <person name="Liuni S."/>
            <person name="McWilliam S."/>
            <person name="Madan Babu M."/>
            <person name="Madera M."/>
            <person name="Marchionni L."/>
            <person name="Matsuda H."/>
            <person name="Matsuzawa S."/>
            <person name="Miki H."/>
            <person name="Mignone F."/>
            <person name="Miyake S."/>
            <person name="Morris K."/>
            <person name="Mottagui-Tabar S."/>
            <person name="Mulder N."/>
            <person name="Nakano N."/>
            <person name="Nakauchi H."/>
            <person name="Ng P."/>
            <person name="Nilsson R."/>
            <person name="Nishiguchi S."/>
            <person name="Nishikawa S."/>
            <person name="Nori F."/>
            <person name="Ohara O."/>
            <person name="Okazaki Y."/>
            <person name="Orlando V."/>
            <person name="Pang K.C."/>
            <person name="Pavan W.J."/>
            <person name="Pavesi G."/>
            <person name="Pesole G."/>
            <person name="Petrovsky N."/>
            <person name="Piazza S."/>
            <person name="Reed J."/>
            <person name="Reid J.F."/>
            <person name="Ring B.Z."/>
            <person name="Ringwald M."/>
            <person name="Rost B."/>
            <person name="Ruan Y."/>
            <person name="Salzberg S.L."/>
            <person name="Sandelin A."/>
            <person name="Schneider C."/>
            <person name="Schoenbach C."/>
            <person name="Sekiguchi K."/>
            <person name="Semple C.A."/>
            <person name="Seno S."/>
            <person name="Sessa L."/>
            <person name="Sheng Y."/>
            <person name="Shibata Y."/>
            <person name="Shimada H."/>
            <person name="Shimada K."/>
            <person name="Silva D."/>
            <person name="Sinclair B."/>
            <person name="Sperling S."/>
            <person name="Stupka E."/>
            <person name="Sugiura K."/>
            <person name="Sultana R."/>
            <person name="Takenaka Y."/>
            <person name="Taki K."/>
            <person name="Tammoja K."/>
            <person name="Tan S.L."/>
            <person name="Tang S."/>
            <person name="Taylor M.S."/>
            <person name="Tegner J."/>
            <person name="Teichmann S.A."/>
            <person name="Ueda H.R."/>
            <person name="van Nimwegen E."/>
            <person name="Verardo R."/>
            <person name="Wei C.L."/>
            <person name="Yagi K."/>
            <person name="Yamanishi H."/>
            <person name="Zabarovsky E."/>
            <person name="Zhu S."/>
            <person name="Zimmer A."/>
            <person name="Hide W."/>
            <person name="Bult C."/>
            <person name="Grimmond S.M."/>
            <person name="Teasdale R.D."/>
            <person name="Liu E.T."/>
            <person name="Brusic V."/>
            <person name="Quackenbush J."/>
            <person name="Wahlestedt C."/>
            <person name="Mattick J.S."/>
            <person name="Hume D.A."/>
            <person name="Kai C."/>
            <person name="Sasaki D."/>
            <person name="Tomaru Y."/>
            <person name="Fukuda S."/>
            <person name="Kanamori-Katayama M."/>
            <person name="Suzuki M."/>
            <person name="Aoki J."/>
            <person name="Arakawa T."/>
            <person name="Iida J."/>
            <person name="Imamura K."/>
            <person name="Itoh M."/>
            <person name="Kato T."/>
            <person name="Kawaji H."/>
            <person name="Kawagashira N."/>
            <person name="Kawashima T."/>
            <person name="Kojima M."/>
            <person name="Kondo S."/>
            <person name="Konno H."/>
            <person name="Nakano K."/>
            <person name="Ninomiya N."/>
            <person name="Nishio T."/>
            <person name="Okada M."/>
            <person name="Plessy C."/>
            <person name="Shibata K."/>
            <person name="Shiraki T."/>
            <person name="Suzuki S."/>
            <person name="Tagami M."/>
            <person name="Waki K."/>
            <person name="Watahiki A."/>
            <person name="Okamura-Oho Y."/>
            <person name="Suzuki H."/>
            <person name="Kawai J."/>
            <person name="Hayashizaki Y."/>
        </authorList>
    </citation>
    <scope>NUCLEOTIDE SEQUENCE [LARGE SCALE MRNA]</scope>
    <source>
        <strain>C57BL/6J</strain>
        <strain>NOD</strain>
        <tissue>Cerebellum</tissue>
        <tissue>Corpora quadrigemina</tissue>
        <tissue>Spleen</tissue>
    </source>
</reference>
<reference key="2">
    <citation type="journal article" date="2004" name="Genome Res.">
        <title>The status, quality, and expansion of the NIH full-length cDNA project: the Mammalian Gene Collection (MGC).</title>
        <authorList>
            <consortium name="The MGC Project Team"/>
        </authorList>
    </citation>
    <scope>NUCLEOTIDE SEQUENCE [LARGE SCALE MRNA]</scope>
    <source>
        <strain>C57BL/6J</strain>
        <strain>FVB/N</strain>
        <tissue>Brain</tissue>
        <tissue>Kidney</tissue>
    </source>
</reference>
<reference key="3">
    <citation type="journal article" date="2007" name="Proc. Natl. Acad. Sci. U.S.A.">
        <title>Large-scale phosphorylation analysis of mouse liver.</title>
        <authorList>
            <person name="Villen J."/>
            <person name="Beausoleil S.A."/>
            <person name="Gerber S.A."/>
            <person name="Gygi S.P."/>
        </authorList>
    </citation>
    <scope>PHOSPHORYLATION [LARGE SCALE ANALYSIS] AT SER-62 AND SER-64</scope>
    <scope>IDENTIFICATION BY MASS SPECTROMETRY [LARGE SCALE ANALYSIS]</scope>
    <source>
        <tissue>Liver</tissue>
    </source>
</reference>
<reference key="4">
    <citation type="journal article" date="2010" name="Cell">
        <title>A tissue-specific atlas of mouse protein phosphorylation and expression.</title>
        <authorList>
            <person name="Huttlin E.L."/>
            <person name="Jedrychowski M.P."/>
            <person name="Elias J.E."/>
            <person name="Goswami T."/>
            <person name="Rad R."/>
            <person name="Beausoleil S.A."/>
            <person name="Villen J."/>
            <person name="Haas W."/>
            <person name="Sowa M.E."/>
            <person name="Gygi S.P."/>
        </authorList>
    </citation>
    <scope>PHOSPHORYLATION [LARGE SCALE ANALYSIS] AT SER-62; SER-64 AND SER-177</scope>
    <scope>IDENTIFICATION BY MASS SPECTROMETRY [LARGE SCALE ANALYSIS]</scope>
    <source>
        <tissue>Kidney</tissue>
        <tissue>Liver</tissue>
        <tissue>Lung</tissue>
        <tissue>Pancreas</tissue>
        <tissue>Spleen</tissue>
        <tissue>Testis</tissue>
    </source>
</reference>
<keyword id="KW-0156">Chromatin regulator</keyword>
<keyword id="KW-0489">Methyltransferase</keyword>
<keyword id="KW-0539">Nucleus</keyword>
<keyword id="KW-0597">Phosphoprotein</keyword>
<keyword id="KW-1185">Reference proteome</keyword>
<keyword id="KW-0678">Repressor</keyword>
<keyword id="KW-0698">rRNA processing</keyword>
<keyword id="KW-0949">S-adenosyl-L-methionine</keyword>
<keyword id="KW-0804">Transcription</keyword>
<keyword id="KW-0805">Transcription regulation</keyword>
<keyword id="KW-0808">Transferase</keyword>
<comment type="function">
    <text evidence="1">Essential component of the eNoSC (energy-dependent nucleolar silencing) complex, a complex that mediates silencing of rDNA in response to intracellular energy status and acts by recruiting histone-modifying enzymes. The eNoSC complex is able to sense the energy status of cell: upon glucose starvation, elevation of NAD(+)/NADP(+) ratio activates SIRT1, leading to histone H3 deacetylation followed by dimethylation of H3 at 'Lys-9' (H3K9me2) by SUV39H1 and the formation of silent chromatin in the rDNA locus. In the complex, RRP8 binds to H3K9me2 and probably acts as a methyltransferase. Its substrates are however unknown (By similarity).</text>
</comment>
<comment type="subunit">
    <text evidence="1">Component of the eNoSC complex, composed of SIRT1, SUV39H1 and RRP8.</text>
</comment>
<comment type="subcellular location">
    <subcellularLocation>
        <location evidence="1">Nucleus</location>
        <location evidence="1">Nucleolus</location>
    </subcellularLocation>
    <text evidence="1">Localizes at rDNA locus.</text>
</comment>
<comment type="similarity">
    <text evidence="4">Belongs to the methyltransferase superfamily. RRP8 family.</text>
</comment>
<comment type="sequence caution" evidence="4">
    <conflict type="frameshift">
        <sequence resource="EMBL-CDS" id="BAC37008"/>
    </conflict>
</comment>
<protein>
    <recommendedName>
        <fullName>Ribosomal RNA-processing protein 8</fullName>
        <ecNumber>2.1.1.-</ecNumber>
    </recommendedName>
    <alternativeName>
        <fullName>Cerebral protein 1 homolog</fullName>
    </alternativeName>
</protein>